<proteinExistence type="evidence at protein level"/>
<sequence length="610" mass="64512">MRYIAGIDIGNSSTEVALARQDETGALTITHSALAETTGIKGTLRNVFGIQEALALVAKRAGINVRDISLIRINEATPVIGDVAMETITETIITESTMIGHNPKTPGGAGLGVGITITPEELLTRPADSSYILVVSSAFDFADIANVINASMRAGYQITGVILQRDDGVLVSNRLEKSLPIVDEVLYIDRIPLGMLAAIEVAVPGKVIETLSNPYGIATVFNLNADETKNIVPMARALIGNRSAVVVKTPSGDVKARAIPAGNLELQAQGRTVRVDVAAGAEAIMKAVDGCGKLDNVTGEAGTNIGGMLEHVRQTMAELTNKPSSEIFIQDLLAVDTSVPVSVTGGLAGEFSLEQAVGIASMVKSDRLQMAMIAREIEQKLNIDVQIGGAEAEAAILGALTTPGTTRPLAILDLGAGSTDASIINPKGEIIATHLAGAGDMVTMIIARELGLEDRYLAEEIKKYPLAKVESLFHLRHEDGSVQFFPTPLPPAVFARVCVVKPDELVPLPGDLALEKVRAIRRSAKERVFVTNALRALRQVSPTGNIRDIPFVVLVGGSSLDFEVPQLVTDALAHYRLVAGRGNIRGSEGPRNAVATGLILSWHKEFAHGQ</sequence>
<comment type="function">
    <text evidence="1">Large subunit of the propanediol dehydratase-reactivating factor (DDR), which reactivates suicidally inhibited adenosylcobalamin-dependent propanediol dehydratase (diol dehydratase, DDH) found in the bacterial microcompartment (BMC) dedicated to 1,2-propanediol (1,2-PD) degradation. Reactivates inactivated DDH in the presence of ATP, Mg(2+) and free adenosylcobalamin (AdoCbl), by mediating the exchange of the tightly bound damaged cofactor AdoCbl for a free intact one. This subunit contains the adenosine nucleotide binding site.</text>
</comment>
<comment type="function">
    <text evidence="8">The 1,2-PD-specific bacterial microcompartment (BMC) concentrates low levels of 1,2-PD catabolic enzymes, concentrates volatile reaction intermediates thus enhancing pathway flux and keeps the level of toxic, mutagenic propionaldehyde low.</text>
</comment>
<comment type="catalytic activity">
    <reaction evidence="1">
        <text>ATP + H2O = ADP + phosphate + H(+)</text>
        <dbReference type="Rhea" id="RHEA:13065"/>
        <dbReference type="ChEBI" id="CHEBI:15377"/>
        <dbReference type="ChEBI" id="CHEBI:15378"/>
        <dbReference type="ChEBI" id="CHEBI:30616"/>
        <dbReference type="ChEBI" id="CHEBI:43474"/>
        <dbReference type="ChEBI" id="CHEBI:456216"/>
    </reaction>
</comment>
<comment type="cofactor">
    <cofactor evidence="1">
        <name>Mg(2+)</name>
        <dbReference type="ChEBI" id="CHEBI:18420"/>
    </cofactor>
</comment>
<comment type="pathway">
    <text evidence="7">Polyol metabolism; 1,2-propanediol degradation.</text>
</comment>
<comment type="subunit">
    <text evidence="1">Forms a heterotetramer PduG(2)/PduH(2).</text>
</comment>
<comment type="subcellular location">
    <subcellularLocation>
        <location evidence="3">Bacterial microcompartment</location>
    </subcellularLocation>
</comment>
<comment type="induction">
    <text evidence="2 4">BMC production is induced by growth on 1,2-PD vitamin B12 medium.</text>
</comment>
<comment type="disruption phenotype">
    <text evidence="4">Cells lacking this gene are defective in aerobic degradation of propanediol.</text>
</comment>
<comment type="miscellaneous">
    <text evidence="2 3">Bacterial microcompartments (BMC) 100-200 nm in cross section are formed during aerobic growth on minimal 1,2-PD-B12 or anaerobic growth on 1,2-PD-tetrathionate medium, but not during aerobic growth on glucose, anerobic growth on glucose or pyruvate-tetrathionate (PubMed:10498708). BMCs can constitute up to 10% of total cell protein (PubMed:12923081).</text>
</comment>
<comment type="similarity">
    <text evidence="6">Belongs to the DdrA/PduG family.</text>
</comment>
<comment type="caution">
    <text evidence="9">Originally suggested to encode a cobalamin adenosyl transferase.</text>
</comment>
<dbReference type="EMBL" id="AF026270">
    <property type="protein sequence ID" value="AAB84105.2"/>
    <property type="molecule type" value="Genomic_DNA"/>
</dbReference>
<dbReference type="EMBL" id="AE006468">
    <property type="protein sequence ID" value="AAL20947.1"/>
    <property type="molecule type" value="Genomic_DNA"/>
</dbReference>
<dbReference type="RefSeq" id="NP_460988.1">
    <property type="nucleotide sequence ID" value="NC_003197.2"/>
</dbReference>
<dbReference type="RefSeq" id="WP_001268876.1">
    <property type="nucleotide sequence ID" value="NC_003197.2"/>
</dbReference>
<dbReference type="SMR" id="O31043"/>
<dbReference type="STRING" id="99287.STM2043"/>
<dbReference type="PaxDb" id="99287-STM2043"/>
<dbReference type="GeneID" id="1253564"/>
<dbReference type="KEGG" id="stm:STM2043"/>
<dbReference type="PATRIC" id="fig|99287.12.peg.2165"/>
<dbReference type="HOGENOM" id="CLU_449540_0_0_6"/>
<dbReference type="OMA" id="HKEFAYG"/>
<dbReference type="PhylomeDB" id="O31043"/>
<dbReference type="BioCyc" id="SENT99287:STM2043-MONOMER"/>
<dbReference type="UniPathway" id="UPA00621"/>
<dbReference type="Proteomes" id="UP000001014">
    <property type="component" value="Chromosome"/>
</dbReference>
<dbReference type="GO" id="GO:0031472">
    <property type="term" value="C:propanediol degradation polyhedral organelle"/>
    <property type="evidence" value="ECO:0000314"/>
    <property type="project" value="UniProtKB"/>
</dbReference>
<dbReference type="GO" id="GO:0005524">
    <property type="term" value="F:ATP binding"/>
    <property type="evidence" value="ECO:0007669"/>
    <property type="project" value="UniProtKB-KW"/>
</dbReference>
<dbReference type="GO" id="GO:0016787">
    <property type="term" value="F:hydrolase activity"/>
    <property type="evidence" value="ECO:0007669"/>
    <property type="project" value="UniProtKB-KW"/>
</dbReference>
<dbReference type="GO" id="GO:0046872">
    <property type="term" value="F:metal ion binding"/>
    <property type="evidence" value="ECO:0007669"/>
    <property type="project" value="UniProtKB-KW"/>
</dbReference>
<dbReference type="GO" id="GO:0051144">
    <property type="term" value="P:propanediol catabolic process"/>
    <property type="evidence" value="ECO:0007669"/>
    <property type="project" value="UniProtKB-UniPathway"/>
</dbReference>
<dbReference type="Gene3D" id="3.30.420.40">
    <property type="match status" value="2"/>
</dbReference>
<dbReference type="Gene3D" id="3.90.470.30">
    <property type="match status" value="1"/>
</dbReference>
<dbReference type="Gene3D" id="2.40.50.140">
    <property type="entry name" value="Nucleic acid-binding proteins"/>
    <property type="match status" value="1"/>
</dbReference>
<dbReference type="Gene3D" id="3.50.30.70">
    <property type="entry name" value="Swiveling domain of dehydratase reactivase alpha subunit"/>
    <property type="match status" value="1"/>
</dbReference>
<dbReference type="InterPro" id="IPR043129">
    <property type="entry name" value="ATPase_NBD"/>
</dbReference>
<dbReference type="InterPro" id="IPR030994">
    <property type="entry name" value="DDR_dom"/>
</dbReference>
<dbReference type="InterPro" id="IPR040916">
    <property type="entry name" value="DDR_swiveling"/>
</dbReference>
<dbReference type="InterPro" id="IPR009191">
    <property type="entry name" value="DDRA"/>
</dbReference>
<dbReference type="InterPro" id="IPR028975">
    <property type="entry name" value="DDRA_swiveling_dom_sf"/>
</dbReference>
<dbReference type="InterPro" id="IPR012340">
    <property type="entry name" value="NA-bd_OB-fold"/>
</dbReference>
<dbReference type="NCBIfam" id="TIGR04491">
    <property type="entry name" value="reactive_PduG"/>
    <property type="match status" value="1"/>
</dbReference>
<dbReference type="Pfam" id="PF08841">
    <property type="entry name" value="DDR"/>
    <property type="match status" value="1"/>
</dbReference>
<dbReference type="Pfam" id="PF18427">
    <property type="entry name" value="DDR_swiveling"/>
    <property type="match status" value="1"/>
</dbReference>
<dbReference type="PIRSF" id="PIRSF011502">
    <property type="entry name" value="DdrA_PduG"/>
    <property type="match status" value="1"/>
</dbReference>
<dbReference type="SUPFAM" id="SSF53067">
    <property type="entry name" value="Actin-like ATPase domain"/>
    <property type="match status" value="2"/>
</dbReference>
<dbReference type="SUPFAM" id="SSF82317">
    <property type="entry name" value="Swiveling domain of dehydratase reactivase alpha subunit"/>
    <property type="match status" value="1"/>
</dbReference>
<feature type="chain" id="PRO_0000454262" description="Propanediol dehydratase-reactivating factor large subunit">
    <location>
        <begin position="1"/>
        <end position="610"/>
    </location>
</feature>
<feature type="binding site" evidence="1">
    <location>
        <begin position="11"/>
        <end position="13"/>
    </location>
    <ligand>
        <name>ATP</name>
        <dbReference type="ChEBI" id="CHEBI:30616"/>
    </ligand>
</feature>
<feature type="binding site" evidence="1">
    <location>
        <position position="105"/>
    </location>
    <ligand>
        <name>Mg(2+)</name>
        <dbReference type="ChEBI" id="CHEBI:18420"/>
    </ligand>
</feature>
<feature type="binding site" evidence="1">
    <location>
        <position position="166"/>
    </location>
    <ligand>
        <name>Mg(2+)</name>
        <dbReference type="ChEBI" id="CHEBI:18420"/>
    </ligand>
</feature>
<feature type="binding site" evidence="1">
    <location>
        <position position="183"/>
    </location>
    <ligand>
        <name>Mg(2+)</name>
        <dbReference type="ChEBI" id="CHEBI:18420"/>
    </ligand>
</feature>
<feature type="binding site" evidence="1">
    <location>
        <begin position="459"/>
        <end position="462"/>
    </location>
    <ligand>
        <name>ATP</name>
        <dbReference type="ChEBI" id="CHEBI:30616"/>
    </ligand>
</feature>
<feature type="binding site" evidence="1">
    <location>
        <begin position="557"/>
        <end position="558"/>
    </location>
    <ligand>
        <name>ATP</name>
        <dbReference type="ChEBI" id="CHEBI:30616"/>
    </ligand>
</feature>
<feature type="binding site" evidence="1">
    <location>
        <position position="591"/>
    </location>
    <ligand>
        <name>ATP</name>
        <dbReference type="ChEBI" id="CHEBI:30616"/>
    </ligand>
</feature>
<feature type="sequence conflict" description="In Ref. 3; AA sequence." evidence="3" ref="3">
    <original>I</original>
    <variation>L</variation>
    <location>
        <position position="7"/>
    </location>
</feature>
<organism>
    <name type="scientific">Salmonella typhimurium (strain LT2 / SGSC1412 / ATCC 700720)</name>
    <dbReference type="NCBI Taxonomy" id="99287"/>
    <lineage>
        <taxon>Bacteria</taxon>
        <taxon>Pseudomonadati</taxon>
        <taxon>Pseudomonadota</taxon>
        <taxon>Gammaproteobacteria</taxon>
        <taxon>Enterobacterales</taxon>
        <taxon>Enterobacteriaceae</taxon>
        <taxon>Salmonella</taxon>
    </lineage>
</organism>
<reference key="1">
    <citation type="journal article" date="1999" name="J. Bacteriol.">
        <title>The propanediol utilization (pdu) operon of Salmonella enterica serovar typhimurium LT2 includes genes necessary for formation of polyhedral organelles involved in coenzyme B(12)-dependent 1, 2-propanediol degradation.</title>
        <authorList>
            <person name="Bobik T.A."/>
            <person name="Havemann G.D."/>
            <person name="Busch R.J."/>
            <person name="Williams D.S."/>
            <person name="Aldrich H.C."/>
        </authorList>
    </citation>
    <scope>NUCLEOTIDE SEQUENCE [GENOMIC DNA]</scope>
    <scope>PATHWAY</scope>
    <scope>INDUCTION</scope>
    <source>
        <strain>LT2</strain>
    </source>
</reference>
<reference key="2">
    <citation type="journal article" date="2001" name="Nature">
        <title>Complete genome sequence of Salmonella enterica serovar Typhimurium LT2.</title>
        <authorList>
            <person name="McClelland M."/>
            <person name="Sanderson K.E."/>
            <person name="Spieth J."/>
            <person name="Clifton S.W."/>
            <person name="Latreille P."/>
            <person name="Courtney L."/>
            <person name="Porwollik S."/>
            <person name="Ali J."/>
            <person name="Dante M."/>
            <person name="Du F."/>
            <person name="Hou S."/>
            <person name="Layman D."/>
            <person name="Leonard S."/>
            <person name="Nguyen C."/>
            <person name="Scott K."/>
            <person name="Holmes A."/>
            <person name="Grewal N."/>
            <person name="Mulvaney E."/>
            <person name="Ryan E."/>
            <person name="Sun H."/>
            <person name="Florea L."/>
            <person name="Miller W."/>
            <person name="Stoneking T."/>
            <person name="Nhan M."/>
            <person name="Waterston R."/>
            <person name="Wilson R.K."/>
        </authorList>
    </citation>
    <scope>NUCLEOTIDE SEQUENCE [LARGE SCALE GENOMIC DNA]</scope>
    <source>
        <strain>LT2 / SGSC1412 / ATCC 700720</strain>
    </source>
</reference>
<reference key="3">
    <citation type="journal article" date="2003" name="J. Bacteriol.">
        <title>Protein content of polyhedral organelles involved in coenzyme B12-dependent degradation of 1,2-propanediol in Salmonella enterica serovar Typhimurium LT2.</title>
        <authorList>
            <person name="Havemann G.D."/>
            <person name="Bobik T.A."/>
        </authorList>
    </citation>
    <scope>PROTEIN SEQUENCE OF 1-7</scope>
    <scope>SUBCELLULAR LOCATION</scope>
    <source>
        <strain>LT2</strain>
    </source>
</reference>
<reference key="4">
    <citation type="journal article" date="1997" name="J. Bacteriol.">
        <title>Genetic characterization of the pdu operon: use of 1,2-propanediol in Salmonella typhimurium.</title>
        <authorList>
            <person name="Walter D."/>
            <person name="Ailion M."/>
            <person name="Roth J."/>
        </authorList>
    </citation>
    <scope>FUNCTION</scope>
    <scope>INDUCTION</scope>
    <scope>DISRUPTION PHENOTYPE</scope>
    <source>
        <strain>LT2</strain>
    </source>
</reference>
<reference key="5">
    <citation type="journal article" date="2017" name="PLoS Comput. Biol.">
        <title>A systems-level model reveals that 1,2-Propanediol utilization microcompartments enhance pathway flux through intermediate sequestration.</title>
        <authorList>
            <person name="Jakobson C.M."/>
            <person name="Tullman-Ercek D."/>
            <person name="Slininger M.F."/>
            <person name="Mangan N.M."/>
        </authorList>
    </citation>
    <scope>SYSTEM-MODELING</scope>
    <scope>FUNCTION</scope>
    <source>
        <strain>LT2</strain>
    </source>
</reference>
<accession>O31043</accession>
<accession>Q7BV82</accession>
<keyword id="KW-0067">ATP-binding</keyword>
<keyword id="KW-1283">Bacterial microcompartment</keyword>
<keyword id="KW-0143">Chaperone</keyword>
<keyword id="KW-0903">Direct protein sequencing</keyword>
<keyword id="KW-0378">Hydrolase</keyword>
<keyword id="KW-0460">Magnesium</keyword>
<keyword id="KW-0479">Metal-binding</keyword>
<keyword id="KW-0547">Nucleotide-binding</keyword>
<keyword id="KW-1185">Reference proteome</keyword>
<protein>
    <recommendedName>
        <fullName evidence="1">Propanediol dehydratase-reactivating factor large subunit</fullName>
        <shortName>DDR large subunit</shortName>
    </recommendedName>
    <alternativeName>
        <fullName>Propanediol utilization protein PduG</fullName>
    </alternativeName>
</protein>
<name>PDUG_SALTY</name>
<gene>
    <name evidence="5" type="primary">pduG</name>
    <name type="ordered locus">STM2043</name>
</gene>
<evidence type="ECO:0000250" key="1">
    <source>
        <dbReference type="UniProtKB" id="O68195"/>
    </source>
</evidence>
<evidence type="ECO:0000269" key="2">
    <source>
    </source>
</evidence>
<evidence type="ECO:0000269" key="3">
    <source>
    </source>
</evidence>
<evidence type="ECO:0000269" key="4">
    <source>
    </source>
</evidence>
<evidence type="ECO:0000303" key="5">
    <source>
    </source>
</evidence>
<evidence type="ECO:0000305" key="6"/>
<evidence type="ECO:0000305" key="7">
    <source>
    </source>
</evidence>
<evidence type="ECO:0000305" key="8">
    <source>
    </source>
</evidence>
<evidence type="ECO:0000305" key="9">
    <source>
    </source>
</evidence>